<sequence length="467" mass="50666">MSQLLTARQAEELHKSIIAYLASVNLTESSAALRAELGDSVSIDDATLKKYEGLLEKKWTSVVRLQKKIMDLESRCAALQSELDSATPTSLLRKNQDPTSWLPRSPARHILEGHRNPVTCVAFHPVFSSLASGSDDTTIKIWDWELGELERTVKGHTKAVLDVDYGGPRGGTLLASCSSDLTIKLWDPSDNYKNIRTLPGHDHSVSSVRFIPSGAAGSPMSGNLLVSASRDKTLRIWDVTTGYCVKTLSGHVDWVRAVAPSIDGRFLLAAGDDRIPRLWDLSSAETKSTFLGHEHVIECVAIAPAASYPHLAVLSGLKKPPPASSSAEFFATGSRDKTIRLWDSRGNLIKTLVGHDNWVRALAFHPGGKHLLSVADDKTIRCWDLTQECKCVRVISDAHGHFVTCLRWAPPLIKDGGANGEAETNGTPAATSTTNGVRPDPNVATKISIRCVIATGSVDQKVRIFAT</sequence>
<accession>Q4WLM7</accession>
<reference key="1">
    <citation type="journal article" date="2005" name="Nature">
        <title>Genomic sequence of the pathogenic and allergenic filamentous fungus Aspergillus fumigatus.</title>
        <authorList>
            <person name="Nierman W.C."/>
            <person name="Pain A."/>
            <person name="Anderson M.J."/>
            <person name="Wortman J.R."/>
            <person name="Kim H.S."/>
            <person name="Arroyo J."/>
            <person name="Berriman M."/>
            <person name="Abe K."/>
            <person name="Archer D.B."/>
            <person name="Bermejo C."/>
            <person name="Bennett J.W."/>
            <person name="Bowyer P."/>
            <person name="Chen D."/>
            <person name="Collins M."/>
            <person name="Coulsen R."/>
            <person name="Davies R."/>
            <person name="Dyer P.S."/>
            <person name="Farman M.L."/>
            <person name="Fedorova N."/>
            <person name="Fedorova N.D."/>
            <person name="Feldblyum T.V."/>
            <person name="Fischer R."/>
            <person name="Fosker N."/>
            <person name="Fraser A."/>
            <person name="Garcia J.L."/>
            <person name="Garcia M.J."/>
            <person name="Goble A."/>
            <person name="Goldman G.H."/>
            <person name="Gomi K."/>
            <person name="Griffith-Jones S."/>
            <person name="Gwilliam R."/>
            <person name="Haas B.J."/>
            <person name="Haas H."/>
            <person name="Harris D.E."/>
            <person name="Horiuchi H."/>
            <person name="Huang J."/>
            <person name="Humphray S."/>
            <person name="Jimenez J."/>
            <person name="Keller N."/>
            <person name="Khouri H."/>
            <person name="Kitamoto K."/>
            <person name="Kobayashi T."/>
            <person name="Konzack S."/>
            <person name="Kulkarni R."/>
            <person name="Kumagai T."/>
            <person name="Lafton A."/>
            <person name="Latge J.-P."/>
            <person name="Li W."/>
            <person name="Lord A."/>
            <person name="Lu C."/>
            <person name="Majoros W.H."/>
            <person name="May G.S."/>
            <person name="Miller B.L."/>
            <person name="Mohamoud Y."/>
            <person name="Molina M."/>
            <person name="Monod M."/>
            <person name="Mouyna I."/>
            <person name="Mulligan S."/>
            <person name="Murphy L.D."/>
            <person name="O'Neil S."/>
            <person name="Paulsen I."/>
            <person name="Penalva M.A."/>
            <person name="Pertea M."/>
            <person name="Price C."/>
            <person name="Pritchard B.L."/>
            <person name="Quail M.A."/>
            <person name="Rabbinowitsch E."/>
            <person name="Rawlins N."/>
            <person name="Rajandream M.A."/>
            <person name="Reichard U."/>
            <person name="Renauld H."/>
            <person name="Robson G.D."/>
            <person name="Rodriguez de Cordoba S."/>
            <person name="Rodriguez-Pena J.M."/>
            <person name="Ronning C.M."/>
            <person name="Rutter S."/>
            <person name="Salzberg S.L."/>
            <person name="Sanchez M."/>
            <person name="Sanchez-Ferrero J.C."/>
            <person name="Saunders D."/>
            <person name="Seeger K."/>
            <person name="Squares R."/>
            <person name="Squares S."/>
            <person name="Takeuchi M."/>
            <person name="Tekaia F."/>
            <person name="Turner G."/>
            <person name="Vazquez de Aldana C.R."/>
            <person name="Weidman J."/>
            <person name="White O."/>
            <person name="Woodward J.R."/>
            <person name="Yu J.-H."/>
            <person name="Fraser C.M."/>
            <person name="Galagan J.E."/>
            <person name="Asai K."/>
            <person name="Machida M."/>
            <person name="Hall N."/>
            <person name="Barrell B.G."/>
            <person name="Denning D.W."/>
        </authorList>
    </citation>
    <scope>NUCLEOTIDE SEQUENCE [LARGE SCALE GENOMIC DNA]</scope>
    <source>
        <strain>ATCC MYA-4609 / CBS 101355 / FGSC A1100 / Af293</strain>
    </source>
</reference>
<protein>
    <recommendedName>
        <fullName evidence="1">Nuclear distribution protein nudF</fullName>
    </recommendedName>
    <alternativeName>
        <fullName evidence="1">Lissencephaly-1 homolog</fullName>
        <shortName evidence="1">LIS-1</shortName>
    </alternativeName>
</protein>
<name>LIS1_ASPFU</name>
<comment type="function">
    <text evidence="1">Positively regulates the activity of the minus-end directed microtubule motor protein dynein. May enhance dynein-mediated microtubule sliding by targeting dynein to the microtubule plus end. Required for nuclear migration during vegetative growth as well as development. Required for retrograde early endosome (EE) transport from the hyphal tip. Required for localization of dynein to the mitotic spindle poles. Recruits additional proteins to the dynein complex at SPBs.</text>
</comment>
<comment type="subunit">
    <text evidence="1">Self-associates. Interacts with nudE and dynein.</text>
</comment>
<comment type="subcellular location">
    <subcellularLocation>
        <location>Cytoplasm</location>
        <location>Cytoskeleton</location>
    </subcellularLocation>
    <subcellularLocation>
        <location evidence="1">Cytoplasm</location>
        <location evidence="1">Cytoskeleton</location>
        <location evidence="1">Spindle pole</location>
    </subcellularLocation>
    <text evidence="1">Localizes to the plus ends of microtubules at the hyphal tip and the mitotic spindle poles.</text>
</comment>
<comment type="domain">
    <text evidence="1">Dimerization mediated by the LisH domain may be required to activate dynein.</text>
</comment>
<comment type="similarity">
    <text evidence="1">Belongs to the WD repeat LIS1/nudF family.</text>
</comment>
<keyword id="KW-0131">Cell cycle</keyword>
<keyword id="KW-0132">Cell division</keyword>
<keyword id="KW-0175">Coiled coil</keyword>
<keyword id="KW-0963">Cytoplasm</keyword>
<keyword id="KW-0206">Cytoskeleton</keyword>
<keyword id="KW-0493">Microtubule</keyword>
<keyword id="KW-0498">Mitosis</keyword>
<keyword id="KW-1185">Reference proteome</keyword>
<keyword id="KW-0677">Repeat</keyword>
<keyword id="KW-0813">Transport</keyword>
<keyword id="KW-0853">WD repeat</keyword>
<dbReference type="EMBL" id="AAHF01000006">
    <property type="protein sequence ID" value="EAL89137.1"/>
    <property type="molecule type" value="Genomic_DNA"/>
</dbReference>
<dbReference type="RefSeq" id="XP_751175.1">
    <property type="nucleotide sequence ID" value="XM_746082.1"/>
</dbReference>
<dbReference type="SMR" id="Q4WLM7"/>
<dbReference type="FunCoup" id="Q4WLM7">
    <property type="interactions" value="52"/>
</dbReference>
<dbReference type="STRING" id="330879.Q4WLM7"/>
<dbReference type="EnsemblFungi" id="EAL89137">
    <property type="protein sequence ID" value="EAL89137"/>
    <property type="gene ID" value="AFUA_6G12970"/>
</dbReference>
<dbReference type="GeneID" id="3508482"/>
<dbReference type="KEGG" id="afm:AFUA_6G12970"/>
<dbReference type="VEuPathDB" id="FungiDB:Afu6g12970"/>
<dbReference type="eggNOG" id="KOG0295">
    <property type="taxonomic scope" value="Eukaryota"/>
</dbReference>
<dbReference type="HOGENOM" id="CLU_000288_57_15_1"/>
<dbReference type="InParanoid" id="Q4WLM7"/>
<dbReference type="OMA" id="WHVATKE"/>
<dbReference type="OrthoDB" id="10264588at2759"/>
<dbReference type="Proteomes" id="UP000002530">
    <property type="component" value="Chromosome 6"/>
</dbReference>
<dbReference type="GO" id="GO:0005881">
    <property type="term" value="C:cytoplasmic microtubule"/>
    <property type="evidence" value="ECO:0000318"/>
    <property type="project" value="GO_Central"/>
</dbReference>
<dbReference type="GO" id="GO:0000776">
    <property type="term" value="C:kinetochore"/>
    <property type="evidence" value="ECO:0000318"/>
    <property type="project" value="GO_Central"/>
</dbReference>
<dbReference type="GO" id="GO:0005875">
    <property type="term" value="C:microtubule associated complex"/>
    <property type="evidence" value="ECO:0000318"/>
    <property type="project" value="GO_Central"/>
</dbReference>
<dbReference type="GO" id="GO:0005635">
    <property type="term" value="C:nuclear envelope"/>
    <property type="evidence" value="ECO:0000318"/>
    <property type="project" value="GO_Central"/>
</dbReference>
<dbReference type="GO" id="GO:0000922">
    <property type="term" value="C:spindle pole"/>
    <property type="evidence" value="ECO:0007669"/>
    <property type="project" value="UniProtKB-SubCell"/>
</dbReference>
<dbReference type="GO" id="GO:0070840">
    <property type="term" value="F:dynein complex binding"/>
    <property type="evidence" value="ECO:0000318"/>
    <property type="project" value="GO_Central"/>
</dbReference>
<dbReference type="GO" id="GO:0051010">
    <property type="term" value="F:microtubule plus-end binding"/>
    <property type="evidence" value="ECO:0000318"/>
    <property type="project" value="GO_Central"/>
</dbReference>
<dbReference type="GO" id="GO:0051301">
    <property type="term" value="P:cell division"/>
    <property type="evidence" value="ECO:0007669"/>
    <property type="project" value="UniProtKB-KW"/>
</dbReference>
<dbReference type="GO" id="GO:0000132">
    <property type="term" value="P:establishment of mitotic spindle orientation"/>
    <property type="evidence" value="ECO:0000318"/>
    <property type="project" value="GO_Central"/>
</dbReference>
<dbReference type="GO" id="GO:0031023">
    <property type="term" value="P:microtubule organizing center organization"/>
    <property type="evidence" value="ECO:0000318"/>
    <property type="project" value="GO_Central"/>
</dbReference>
<dbReference type="GO" id="GO:0051012">
    <property type="term" value="P:microtubule sliding"/>
    <property type="evidence" value="ECO:0007669"/>
    <property type="project" value="UniProtKB-UniRule"/>
</dbReference>
<dbReference type="GO" id="GO:0007097">
    <property type="term" value="P:nuclear migration"/>
    <property type="evidence" value="ECO:0000318"/>
    <property type="project" value="GO_Central"/>
</dbReference>
<dbReference type="GO" id="GO:0047496">
    <property type="term" value="P:vesicle transport along microtubule"/>
    <property type="evidence" value="ECO:0000318"/>
    <property type="project" value="GO_Central"/>
</dbReference>
<dbReference type="CDD" id="cd00200">
    <property type="entry name" value="WD40"/>
    <property type="match status" value="1"/>
</dbReference>
<dbReference type="FunFam" id="1.20.960.30:FF:000002">
    <property type="entry name" value="Platelet-activating factor acetylhydrolase ib"/>
    <property type="match status" value="1"/>
</dbReference>
<dbReference type="Gene3D" id="1.20.960.30">
    <property type="match status" value="1"/>
</dbReference>
<dbReference type="Gene3D" id="2.130.10.10">
    <property type="entry name" value="YVTN repeat-like/Quinoprotein amine dehydrogenase"/>
    <property type="match status" value="1"/>
</dbReference>
<dbReference type="HAMAP" id="MF_03141">
    <property type="entry name" value="lis1"/>
    <property type="match status" value="1"/>
</dbReference>
<dbReference type="InterPro" id="IPR017252">
    <property type="entry name" value="Dynein_regulator_LIS1"/>
</dbReference>
<dbReference type="InterPro" id="IPR020472">
    <property type="entry name" value="G-protein_beta_WD-40_rep"/>
</dbReference>
<dbReference type="InterPro" id="IPR037190">
    <property type="entry name" value="LIS1_N"/>
</dbReference>
<dbReference type="InterPro" id="IPR006594">
    <property type="entry name" value="LisH"/>
</dbReference>
<dbReference type="InterPro" id="IPR056795">
    <property type="entry name" value="PAC1-like_LisH-like_dom"/>
</dbReference>
<dbReference type="InterPro" id="IPR015943">
    <property type="entry name" value="WD40/YVTN_repeat-like_dom_sf"/>
</dbReference>
<dbReference type="InterPro" id="IPR019775">
    <property type="entry name" value="WD40_repeat_CS"/>
</dbReference>
<dbReference type="InterPro" id="IPR036322">
    <property type="entry name" value="WD40_repeat_dom_sf"/>
</dbReference>
<dbReference type="InterPro" id="IPR001680">
    <property type="entry name" value="WD40_rpt"/>
</dbReference>
<dbReference type="InterPro" id="IPR050349">
    <property type="entry name" value="WD_LIS1/nudF_dynein_reg"/>
</dbReference>
<dbReference type="PANTHER" id="PTHR44129">
    <property type="entry name" value="WD REPEAT-CONTAINING PROTEIN POP1"/>
    <property type="match status" value="1"/>
</dbReference>
<dbReference type="Pfam" id="PF24951">
    <property type="entry name" value="LisH_PAC1"/>
    <property type="match status" value="1"/>
</dbReference>
<dbReference type="Pfam" id="PF00400">
    <property type="entry name" value="WD40"/>
    <property type="match status" value="6"/>
</dbReference>
<dbReference type="PIRSF" id="PIRSF037647">
    <property type="entry name" value="Dynein_regulator_Lis1"/>
    <property type="match status" value="1"/>
</dbReference>
<dbReference type="PRINTS" id="PR00320">
    <property type="entry name" value="GPROTEINBRPT"/>
</dbReference>
<dbReference type="SMART" id="SM00320">
    <property type="entry name" value="WD40"/>
    <property type="match status" value="7"/>
</dbReference>
<dbReference type="SUPFAM" id="SSF109925">
    <property type="entry name" value="Lissencephaly-1 protein (Lis-1, PAF-AH alpha) N-terminal domain"/>
    <property type="match status" value="1"/>
</dbReference>
<dbReference type="SUPFAM" id="SSF50978">
    <property type="entry name" value="WD40 repeat-like"/>
    <property type="match status" value="1"/>
</dbReference>
<dbReference type="PROSITE" id="PS50896">
    <property type="entry name" value="LISH"/>
    <property type="match status" value="1"/>
</dbReference>
<dbReference type="PROSITE" id="PS00678">
    <property type="entry name" value="WD_REPEATS_1"/>
    <property type="match status" value="1"/>
</dbReference>
<dbReference type="PROSITE" id="PS50082">
    <property type="entry name" value="WD_REPEATS_2"/>
    <property type="match status" value="6"/>
</dbReference>
<dbReference type="PROSITE" id="PS50294">
    <property type="entry name" value="WD_REPEATS_REGION"/>
    <property type="match status" value="1"/>
</dbReference>
<feature type="chain" id="PRO_0000240421" description="Nuclear distribution protein nudF">
    <location>
        <begin position="1"/>
        <end position="467"/>
    </location>
</feature>
<feature type="domain" description="LisH" evidence="1">
    <location>
        <begin position="9"/>
        <end position="41"/>
    </location>
</feature>
<feature type="repeat" description="WD 1">
    <location>
        <begin position="113"/>
        <end position="154"/>
    </location>
</feature>
<feature type="repeat" description="WD 2">
    <location>
        <begin position="156"/>
        <end position="196"/>
    </location>
</feature>
<feature type="repeat" description="WD 3">
    <location>
        <begin position="200"/>
        <end position="247"/>
    </location>
</feature>
<feature type="repeat" description="WD 4">
    <location>
        <begin position="250"/>
        <end position="289"/>
    </location>
</feature>
<feature type="repeat" description="WD 5">
    <location>
        <begin position="292"/>
        <end position="352"/>
    </location>
</feature>
<feature type="repeat" description="WD 6">
    <location>
        <begin position="354"/>
        <end position="393"/>
    </location>
</feature>
<feature type="repeat" description="WD 7">
    <location>
        <begin position="398"/>
        <end position="428"/>
    </location>
</feature>
<feature type="repeat" description="WD 8">
    <location>
        <begin position="429"/>
        <end position="466"/>
    </location>
</feature>
<feature type="region of interest" description="Disordered" evidence="2">
    <location>
        <begin position="417"/>
        <end position="439"/>
    </location>
</feature>
<feature type="coiled-coil region" evidence="1">
    <location>
        <begin position="60"/>
        <end position="87"/>
    </location>
</feature>
<feature type="compositionally biased region" description="Polar residues" evidence="2">
    <location>
        <begin position="422"/>
        <end position="436"/>
    </location>
</feature>
<evidence type="ECO:0000255" key="1">
    <source>
        <dbReference type="HAMAP-Rule" id="MF_03141"/>
    </source>
</evidence>
<evidence type="ECO:0000256" key="2">
    <source>
        <dbReference type="SAM" id="MobiDB-lite"/>
    </source>
</evidence>
<proteinExistence type="inferred from homology"/>
<organism>
    <name type="scientific">Aspergillus fumigatus (strain ATCC MYA-4609 / CBS 101355 / FGSC A1100 / Af293)</name>
    <name type="common">Neosartorya fumigata</name>
    <dbReference type="NCBI Taxonomy" id="330879"/>
    <lineage>
        <taxon>Eukaryota</taxon>
        <taxon>Fungi</taxon>
        <taxon>Dikarya</taxon>
        <taxon>Ascomycota</taxon>
        <taxon>Pezizomycotina</taxon>
        <taxon>Eurotiomycetes</taxon>
        <taxon>Eurotiomycetidae</taxon>
        <taxon>Eurotiales</taxon>
        <taxon>Aspergillaceae</taxon>
        <taxon>Aspergillus</taxon>
        <taxon>Aspergillus subgen. Fumigati</taxon>
    </lineage>
</organism>
<gene>
    <name evidence="1" type="primary">nudF</name>
    <name evidence="1" type="synonym">lis1</name>
    <name type="synonym">pac1</name>
    <name type="ORF">AFUA_6G12970</name>
</gene>